<name>SSUB1_AGRFC</name>
<proteinExistence type="inferred from homology"/>
<sequence length="276" mass="30166">MSTGNVTTLRRPEAPPSLPAGTEAKIEHHARPAEGKVAFSFRNVTKSFGDKPVLRGIDLDVREGEFLAVIGKSGCGKSTLLRILAGLDTPTTGTVSKDPSNRTRMMFQEPRLLPWERIANNVSVGLTGIAKGEAAREQALGILDEVGLKDRAGEWPYVLSGGQKQRVALARALVAHPQILALDEPLGALDALTRIEMQLLLERIWRKQKFTAVLVTHDVSEAVALADRIVVIDEGRIALDLDVKLPRPRRHGTPEFARLEEQVLNQLFGRGDITGQ</sequence>
<evidence type="ECO:0000255" key="1">
    <source>
        <dbReference type="HAMAP-Rule" id="MF_01724"/>
    </source>
</evidence>
<evidence type="ECO:0000256" key="2">
    <source>
        <dbReference type="SAM" id="MobiDB-lite"/>
    </source>
</evidence>
<gene>
    <name evidence="1" type="primary">ssuB1</name>
    <name type="ordered locus">Atu4156</name>
    <name type="ORF">AGR_L_1395</name>
</gene>
<dbReference type="EC" id="7.6.2.14" evidence="1"/>
<dbReference type="EMBL" id="AE007870">
    <property type="protein sequence ID" value="AAK89278.1"/>
    <property type="molecule type" value="Genomic_DNA"/>
</dbReference>
<dbReference type="PIR" id="AF3067">
    <property type="entry name" value="AF3067"/>
</dbReference>
<dbReference type="PIR" id="D98219">
    <property type="entry name" value="D98219"/>
</dbReference>
<dbReference type="RefSeq" id="NP_356493.1">
    <property type="nucleotide sequence ID" value="NC_003063.2"/>
</dbReference>
<dbReference type="RefSeq" id="WP_010973604.1">
    <property type="nucleotide sequence ID" value="NC_003063.2"/>
</dbReference>
<dbReference type="SMR" id="Q8U8D6"/>
<dbReference type="STRING" id="176299.Atu4156"/>
<dbReference type="EnsemblBacteria" id="AAK89278">
    <property type="protein sequence ID" value="AAK89278"/>
    <property type="gene ID" value="Atu4156"/>
</dbReference>
<dbReference type="GeneID" id="1136030"/>
<dbReference type="KEGG" id="atu:Atu4156"/>
<dbReference type="PATRIC" id="fig|176299.10.peg.3970"/>
<dbReference type="eggNOG" id="COG1116">
    <property type="taxonomic scope" value="Bacteria"/>
</dbReference>
<dbReference type="HOGENOM" id="CLU_000604_1_22_5"/>
<dbReference type="OrthoDB" id="9797536at2"/>
<dbReference type="PhylomeDB" id="Q8U8D6"/>
<dbReference type="BioCyc" id="AGRO:ATU4156-MONOMER"/>
<dbReference type="Proteomes" id="UP000000813">
    <property type="component" value="Chromosome linear"/>
</dbReference>
<dbReference type="GO" id="GO:0005886">
    <property type="term" value="C:plasma membrane"/>
    <property type="evidence" value="ECO:0007669"/>
    <property type="project" value="UniProtKB-SubCell"/>
</dbReference>
<dbReference type="GO" id="GO:0005524">
    <property type="term" value="F:ATP binding"/>
    <property type="evidence" value="ECO:0007669"/>
    <property type="project" value="UniProtKB-KW"/>
</dbReference>
<dbReference type="GO" id="GO:0016887">
    <property type="term" value="F:ATP hydrolysis activity"/>
    <property type="evidence" value="ECO:0007669"/>
    <property type="project" value="InterPro"/>
</dbReference>
<dbReference type="CDD" id="cd03293">
    <property type="entry name" value="ABC_NrtD_SsuB_transporters"/>
    <property type="match status" value="1"/>
</dbReference>
<dbReference type="Gene3D" id="3.40.50.300">
    <property type="entry name" value="P-loop containing nucleotide triphosphate hydrolases"/>
    <property type="match status" value="1"/>
</dbReference>
<dbReference type="InterPro" id="IPR003593">
    <property type="entry name" value="AAA+_ATPase"/>
</dbReference>
<dbReference type="InterPro" id="IPR003439">
    <property type="entry name" value="ABC_transporter-like_ATP-bd"/>
</dbReference>
<dbReference type="InterPro" id="IPR017871">
    <property type="entry name" value="ABC_transporter-like_CS"/>
</dbReference>
<dbReference type="InterPro" id="IPR050166">
    <property type="entry name" value="ABC_transporter_ATP-bind"/>
</dbReference>
<dbReference type="InterPro" id="IPR027417">
    <property type="entry name" value="P-loop_NTPase"/>
</dbReference>
<dbReference type="PANTHER" id="PTHR42788:SF17">
    <property type="entry name" value="ALIPHATIC SULFONATES IMPORT ATP-BINDING PROTEIN SSUB"/>
    <property type="match status" value="1"/>
</dbReference>
<dbReference type="PANTHER" id="PTHR42788">
    <property type="entry name" value="TAURINE IMPORT ATP-BINDING PROTEIN-RELATED"/>
    <property type="match status" value="1"/>
</dbReference>
<dbReference type="Pfam" id="PF00005">
    <property type="entry name" value="ABC_tran"/>
    <property type="match status" value="1"/>
</dbReference>
<dbReference type="SMART" id="SM00382">
    <property type="entry name" value="AAA"/>
    <property type="match status" value="1"/>
</dbReference>
<dbReference type="SUPFAM" id="SSF52540">
    <property type="entry name" value="P-loop containing nucleoside triphosphate hydrolases"/>
    <property type="match status" value="1"/>
</dbReference>
<dbReference type="PROSITE" id="PS00211">
    <property type="entry name" value="ABC_TRANSPORTER_1"/>
    <property type="match status" value="1"/>
</dbReference>
<dbReference type="PROSITE" id="PS50893">
    <property type="entry name" value="ABC_TRANSPORTER_2"/>
    <property type="match status" value="1"/>
</dbReference>
<dbReference type="PROSITE" id="PS51291">
    <property type="entry name" value="SSUB"/>
    <property type="match status" value="1"/>
</dbReference>
<keyword id="KW-0067">ATP-binding</keyword>
<keyword id="KW-0997">Cell inner membrane</keyword>
<keyword id="KW-1003">Cell membrane</keyword>
<keyword id="KW-0472">Membrane</keyword>
<keyword id="KW-0547">Nucleotide-binding</keyword>
<keyword id="KW-1185">Reference proteome</keyword>
<keyword id="KW-1278">Translocase</keyword>
<keyword id="KW-0813">Transport</keyword>
<feature type="chain" id="PRO_0000279881" description="Aliphatic sulfonates import ATP-binding protein SsuB 1">
    <location>
        <begin position="1"/>
        <end position="276"/>
    </location>
</feature>
<feature type="domain" description="ABC transporter" evidence="1">
    <location>
        <begin position="39"/>
        <end position="259"/>
    </location>
</feature>
<feature type="region of interest" description="Disordered" evidence="2">
    <location>
        <begin position="1"/>
        <end position="21"/>
    </location>
</feature>
<feature type="binding site" evidence="1">
    <location>
        <begin position="71"/>
        <end position="78"/>
    </location>
    <ligand>
        <name>ATP</name>
        <dbReference type="ChEBI" id="CHEBI:30616"/>
    </ligand>
</feature>
<reference key="1">
    <citation type="journal article" date="2001" name="Science">
        <title>The genome of the natural genetic engineer Agrobacterium tumefaciens C58.</title>
        <authorList>
            <person name="Wood D.W."/>
            <person name="Setubal J.C."/>
            <person name="Kaul R."/>
            <person name="Monks D.E."/>
            <person name="Kitajima J.P."/>
            <person name="Okura V.K."/>
            <person name="Zhou Y."/>
            <person name="Chen L."/>
            <person name="Wood G.E."/>
            <person name="Almeida N.F. Jr."/>
            <person name="Woo L."/>
            <person name="Chen Y."/>
            <person name="Paulsen I.T."/>
            <person name="Eisen J.A."/>
            <person name="Karp P.D."/>
            <person name="Bovee D. Sr."/>
            <person name="Chapman P."/>
            <person name="Clendenning J."/>
            <person name="Deatherage G."/>
            <person name="Gillet W."/>
            <person name="Grant C."/>
            <person name="Kutyavin T."/>
            <person name="Levy R."/>
            <person name="Li M.-J."/>
            <person name="McClelland E."/>
            <person name="Palmieri A."/>
            <person name="Raymond C."/>
            <person name="Rouse G."/>
            <person name="Saenphimmachak C."/>
            <person name="Wu Z."/>
            <person name="Romero P."/>
            <person name="Gordon D."/>
            <person name="Zhang S."/>
            <person name="Yoo H."/>
            <person name="Tao Y."/>
            <person name="Biddle P."/>
            <person name="Jung M."/>
            <person name="Krespan W."/>
            <person name="Perry M."/>
            <person name="Gordon-Kamm B."/>
            <person name="Liao L."/>
            <person name="Kim S."/>
            <person name="Hendrick C."/>
            <person name="Zhao Z.-Y."/>
            <person name="Dolan M."/>
            <person name="Chumley F."/>
            <person name="Tingey S.V."/>
            <person name="Tomb J.-F."/>
            <person name="Gordon M.P."/>
            <person name="Olson M.V."/>
            <person name="Nester E.W."/>
        </authorList>
    </citation>
    <scope>NUCLEOTIDE SEQUENCE [LARGE SCALE GENOMIC DNA]</scope>
    <source>
        <strain>C58 / ATCC 33970</strain>
    </source>
</reference>
<reference key="2">
    <citation type="journal article" date="2001" name="Science">
        <title>Genome sequence of the plant pathogen and biotechnology agent Agrobacterium tumefaciens C58.</title>
        <authorList>
            <person name="Goodner B."/>
            <person name="Hinkle G."/>
            <person name="Gattung S."/>
            <person name="Miller N."/>
            <person name="Blanchard M."/>
            <person name="Qurollo B."/>
            <person name="Goldman B.S."/>
            <person name="Cao Y."/>
            <person name="Askenazi M."/>
            <person name="Halling C."/>
            <person name="Mullin L."/>
            <person name="Houmiel K."/>
            <person name="Gordon J."/>
            <person name="Vaudin M."/>
            <person name="Iartchouk O."/>
            <person name="Epp A."/>
            <person name="Liu F."/>
            <person name="Wollam C."/>
            <person name="Allinger M."/>
            <person name="Doughty D."/>
            <person name="Scott C."/>
            <person name="Lappas C."/>
            <person name="Markelz B."/>
            <person name="Flanagan C."/>
            <person name="Crowell C."/>
            <person name="Gurson J."/>
            <person name="Lomo C."/>
            <person name="Sear C."/>
            <person name="Strub G."/>
            <person name="Cielo C."/>
            <person name="Slater S."/>
        </authorList>
    </citation>
    <scope>NUCLEOTIDE SEQUENCE [LARGE SCALE GENOMIC DNA]</scope>
    <source>
        <strain>C58 / ATCC 33970</strain>
    </source>
</reference>
<protein>
    <recommendedName>
        <fullName evidence="1">Aliphatic sulfonates import ATP-binding protein SsuB 1</fullName>
        <ecNumber evidence="1">7.6.2.14</ecNumber>
    </recommendedName>
</protein>
<accession>Q8U8D6</accession>
<accession>Q7CU73</accession>
<organism>
    <name type="scientific">Agrobacterium fabrum (strain C58 / ATCC 33970)</name>
    <name type="common">Agrobacterium tumefaciens (strain C58)</name>
    <dbReference type="NCBI Taxonomy" id="176299"/>
    <lineage>
        <taxon>Bacteria</taxon>
        <taxon>Pseudomonadati</taxon>
        <taxon>Pseudomonadota</taxon>
        <taxon>Alphaproteobacteria</taxon>
        <taxon>Hyphomicrobiales</taxon>
        <taxon>Rhizobiaceae</taxon>
        <taxon>Rhizobium/Agrobacterium group</taxon>
        <taxon>Agrobacterium</taxon>
        <taxon>Agrobacterium tumefaciens complex</taxon>
    </lineage>
</organism>
<comment type="function">
    <text evidence="1">Part of the ABC transporter complex SsuABC involved in aliphatic sulfonates import. Responsible for energy coupling to the transport system.</text>
</comment>
<comment type="catalytic activity">
    <reaction evidence="1">
        <text>ATP + H2O + aliphatic sulfonate-[sulfonate-binding protein]Side 1 = ADP + phosphate + aliphatic sulfonateSide 2 + [sulfonate-binding protein]Side 1.</text>
        <dbReference type="EC" id="7.6.2.14"/>
    </reaction>
</comment>
<comment type="subunit">
    <text evidence="1">The complex is composed of two ATP-binding proteins (SsuB), two transmembrane proteins (SsuC) and a solute-binding protein (SsuA).</text>
</comment>
<comment type="subcellular location">
    <subcellularLocation>
        <location evidence="1">Cell inner membrane</location>
        <topology evidence="1">Peripheral membrane protein</topology>
    </subcellularLocation>
</comment>
<comment type="similarity">
    <text evidence="1">Belongs to the ABC transporter superfamily. Aliphatic sulfonates importer (TC 3.A.1.17.2) family.</text>
</comment>